<reference key="1">
    <citation type="journal article" date="1984" name="EMBO J.">
        <title>The nucleotide sequence of maize streak virus DNA.</title>
        <authorList>
            <person name="Mullineaux P.M."/>
            <person name="Donson J."/>
            <person name="Morris-Krsinich B.A.M."/>
            <person name="Boulton M.I."/>
            <person name="Davies J.W."/>
        </authorList>
    </citation>
    <scope>NUCLEOTIDE SEQUENCE [GENOMIC DNA]</scope>
</reference>
<reference key="2">
    <citation type="journal article" date="1998" name="Plant Mol. Biol.">
        <title>Prediction of functional regions of the maize streak virus replication-associated proteins by protein-protein interaction analysis.</title>
        <authorList>
            <person name="Horvath G.V."/>
            <person name="Pettko-Szandtner A."/>
            <person name="Nikovics K."/>
            <person name="Bilgin M."/>
            <person name="Boulton M.I."/>
            <person name="Davies J.W."/>
            <person name="Gutierrez C."/>
            <person name="Dudits D."/>
        </authorList>
    </citation>
    <scope>REGION OF TRANSACTIVATION</scope>
    <scope>REGION OF OLIGOMERIZATION</scope>
</reference>
<reference key="3">
    <citation type="journal article" date="1997" name="Plant J.">
        <title>Splicing features in maize streak virus virion- and complementary-sense gene expression.</title>
        <authorList>
            <person name="Wright E.A."/>
            <person name="Heckel T."/>
            <person name="Groenendijk J."/>
            <person name="Davies J.W."/>
            <person name="Boulton M.I."/>
        </authorList>
    </citation>
    <scope>ALTERNATIVE SPLICING</scope>
</reference>
<comment type="function">
    <text evidence="1">Essential for the replication of viral ssDNA. The closed circular ssDNA genome is first converted to a superhelical dsDNA. Rep binds a specific region at the genome origin of replication. It introduces an endonucleolytic nick within the conserved sequence 5'-TAATATTAC-3' in the intergenic region of the genome present in all geminiviruses, thereby initiating the rolling circle replication (RCR). Following cleavage, binds covalently to the 5'-phosphate of DNA as a tyrosyl ester. The cleavage gives rise to a free 3'-OH that serves as a primer for the cellular DNA polymerase. The polymerase synthesizes the (+) strand DNA by rolling circle mechanism. After one round of replication, a Rep-catalyzed nucleotidyl transfer reaction releases a circular single-stranded virus genome, thereby terminating the replication. Displays origin-specific DNA cleavage, nucleotidyl transferase, ATPase and helicase activities. Acts as an inhibitor of C-sense gene transcription (By similarity).</text>
</comment>
<comment type="cofactor">
    <cofactor evidence="3">
        <name>Mg(2+)</name>
        <dbReference type="ChEBI" id="CHEBI:18420"/>
    </cofactor>
    <cofactor evidence="3">
        <name>Mn(2+)</name>
        <dbReference type="ChEBI" id="CHEBI:29035"/>
    </cofactor>
    <text evidence="3">Divalent metal cations, possibly Mg(2+) or Mn(2+).</text>
</comment>
<comment type="subunit">
    <text>Homooligomer. Rep binds to repeated DNA motifs (iterons). Forms the O-complex, which is a Rep-DNA complex involved in the initiation of RCR. Part of the C- and V-complexes which are RepA-Rep-DNA complexes involved in the c-sense and v-sense transcription.</text>
</comment>
<comment type="subcellular location">
    <subcellularLocation>
        <location evidence="1">Host nucleus</location>
    </subcellularLocation>
</comment>
<comment type="alternative products">
    <event type="alternative splicing"/>
    <isoform>
        <id>P14978-1</id>
        <name>Rep</name>
        <sequence type="displayed"/>
    </isoform>
    <isoform>
        <id>P14980-1</id>
        <name>RepA</name>
        <sequence type="external"/>
    </isoform>
</comment>
<comment type="domain">
    <text>There are 3 rolling circle replication (RCR) motifs. RCR-2 is probably involved in metal coordination. RCR-3 is required for phosphodiester bond cleavage for initiation of RCR.</text>
</comment>
<comment type="similarity">
    <text evidence="4">Belongs to the geminiviridae Rep protein family.</text>
</comment>
<comment type="sequence caution" evidence="4">
    <conflict type="erroneous gene model prediction">
        <sequence resource="EMBL-CDS" id="CAA25792"/>
    </conflict>
</comment>
<comment type="sequence caution" evidence="4">
    <conflict type="erroneous gene model prediction">
        <sequence resource="EMBL-CDS" id="CAA25793"/>
    </conflict>
</comment>
<protein>
    <recommendedName>
        <fullName>Replication-associated protein</fullName>
        <shortName>Rep</shortName>
        <ecNumber>2.7.7.-</ecNumber>
        <ecNumber>3.1.21.-</ecNumber>
    </recommendedName>
</protein>
<organism>
    <name type="scientific">Maize streak virus genotype A (isolate Nigeria)</name>
    <name type="common">MSV</name>
    <dbReference type="NCBI Taxonomy" id="10823"/>
    <lineage>
        <taxon>Viruses</taxon>
        <taxon>Monodnaviria</taxon>
        <taxon>Shotokuvirae</taxon>
        <taxon>Cressdnaviricota</taxon>
        <taxon>Repensiviricetes</taxon>
        <taxon>Geplafuvirales</taxon>
        <taxon>Geminiviridae</taxon>
        <taxon>Mastrevirus</taxon>
        <taxon>Maize streak virus</taxon>
    </lineage>
</organism>
<accession>P14978</accession>
<name>REP_MSVN</name>
<feature type="chain" id="PRO_0000222291" description="Replication-associated protein">
    <location>
        <begin position="1"/>
        <end position="360"/>
    </location>
</feature>
<feature type="domain" description="CRESS-DNA virus Rep endonuclease" evidence="3">
    <location>
        <begin position="11"/>
        <end position="114"/>
    </location>
</feature>
<feature type="region of interest" description="Oligomerization">
    <location>
        <begin position="175"/>
        <end position="187"/>
    </location>
</feature>
<feature type="region of interest" description="Transactivation">
    <location>
        <begin position="252"/>
        <end position="270"/>
    </location>
</feature>
<feature type="short sequence motif" description="RCR-1" evidence="3">
    <location>
        <begin position="18"/>
        <end position="21"/>
    </location>
</feature>
<feature type="short sequence motif" description="RCR-2" evidence="3">
    <location>
        <begin position="60"/>
        <end position="62"/>
    </location>
</feature>
<feature type="short sequence motif" description="RCR-3" evidence="3">
    <location>
        <begin position="100"/>
        <end position="103"/>
    </location>
</feature>
<feature type="short sequence motif" description="Nuclear localization signal" evidence="2">
    <location>
        <begin position="292"/>
        <end position="303"/>
    </location>
</feature>
<feature type="active site" description="For DNA cleavage activity" evidence="3">
    <location>
        <position position="100"/>
    </location>
</feature>
<feature type="binding site" evidence="3">
    <location>
        <position position="52"/>
    </location>
    <ligand>
        <name>a divalent metal cation</name>
        <dbReference type="ChEBI" id="CHEBI:60240"/>
    </ligand>
</feature>
<feature type="binding site" evidence="3">
    <location>
        <position position="60"/>
    </location>
    <ligand>
        <name>a divalent metal cation</name>
        <dbReference type="ChEBI" id="CHEBI:60240"/>
    </ligand>
</feature>
<feature type="binding site" evidence="3">
    <location>
        <position position="62"/>
    </location>
    <ligand>
        <name>a divalent metal cation</name>
        <dbReference type="ChEBI" id="CHEBI:60240"/>
    </ligand>
</feature>
<feature type="binding site" evidence="3">
    <location>
        <position position="104"/>
    </location>
    <ligand>
        <name>a divalent metal cation</name>
        <dbReference type="ChEBI" id="CHEBI:60240"/>
    </ligand>
</feature>
<feature type="binding site" evidence="2">
    <location>
        <begin position="229"/>
        <end position="236"/>
    </location>
    <ligand>
        <name>ATP</name>
        <dbReference type="ChEBI" id="CHEBI:30616"/>
    </ligand>
</feature>
<keyword id="KW-0025">Alternative splicing</keyword>
<keyword id="KW-0067">ATP-binding</keyword>
<keyword id="KW-0190">Covalent protein-DNA linkage</keyword>
<keyword id="KW-0235">DNA replication</keyword>
<keyword id="KW-0238">DNA-binding</keyword>
<keyword id="KW-0255">Endonuclease</keyword>
<keyword id="KW-0347">Helicase</keyword>
<keyword id="KW-1048">Host nucleus</keyword>
<keyword id="KW-0378">Hydrolase</keyword>
<keyword id="KW-0479">Metal-binding</keyword>
<keyword id="KW-0511">Multifunctional enzyme</keyword>
<keyword id="KW-0540">Nuclease</keyword>
<keyword id="KW-0547">Nucleotide-binding</keyword>
<keyword id="KW-0548">Nucleotidyltransferase</keyword>
<keyword id="KW-0678">Repressor</keyword>
<keyword id="KW-0808">Transferase</keyword>
<proteinExistence type="inferred from homology"/>
<evidence type="ECO:0000250" key="1"/>
<evidence type="ECO:0000255" key="2"/>
<evidence type="ECO:0000255" key="3">
    <source>
        <dbReference type="PROSITE-ProRule" id="PRU01364"/>
    </source>
</evidence>
<evidence type="ECO:0000305" key="4"/>
<organismHost>
    <name type="scientific">Avena sativa</name>
    <name type="common">Oat</name>
    <dbReference type="NCBI Taxonomy" id="4498"/>
</organismHost>
<organismHost>
    <name type="scientific">Axonopus compressus</name>
    <dbReference type="NCBI Taxonomy" id="217170"/>
</organismHost>
<organismHost>
    <name type="scientific">Cenchrus americanus</name>
    <name type="common">Pearl millet</name>
    <name type="synonym">Pennisetum glaucum</name>
    <dbReference type="NCBI Taxonomy" id="4543"/>
</organismHost>
<organismHost>
    <name type="scientific">Cenchrus polystachios</name>
    <dbReference type="NCBI Taxonomy" id="281129"/>
</organismHost>
<organismHost>
    <name type="scientific">Coix lacryma-jobi</name>
    <name type="common">Job's tears</name>
    <dbReference type="NCBI Taxonomy" id="4505"/>
</organismHost>
<organismHost>
    <name type="scientific">Dactyloctenium aegyptium</name>
    <dbReference type="NCBI Taxonomy" id="270102"/>
</organismHost>
<organismHost>
    <name type="scientific">Digitaria</name>
    <dbReference type="NCBI Taxonomy" id="66017"/>
</organismHost>
<organismHost>
    <name type="scientific">Echinochloa colona</name>
    <dbReference type="NCBI Taxonomy" id="90396"/>
</organismHost>
<organismHost>
    <name type="scientific">Eleusine coracana</name>
    <name type="common">Indian finger millet</name>
    <name type="synonym">Ragi</name>
    <dbReference type="NCBI Taxonomy" id="4511"/>
</organismHost>
<organismHost>
    <name type="scientific">Eleusine indica</name>
    <name type="common">Goosegrass</name>
    <name type="synonym">Cynosurus indicus</name>
    <dbReference type="NCBI Taxonomy" id="29674"/>
</organismHost>
<organismHost>
    <name type="scientific">Hordeum vulgare</name>
    <name type="common">Barley</name>
    <dbReference type="NCBI Taxonomy" id="4513"/>
</organismHost>
<organismHost>
    <name type="scientific">Megathyrsus maximus</name>
    <dbReference type="NCBI Taxonomy" id="59788"/>
</organismHost>
<organismHost>
    <name type="scientific">Melinis repens</name>
    <name type="common">Red Natal grass</name>
    <name type="synonym">Rhynchelytrum repens</name>
    <dbReference type="NCBI Taxonomy" id="29709"/>
</organismHost>
<organismHost>
    <name type="scientific">Oryza glaberrima</name>
    <name type="common">African rice</name>
    <dbReference type="NCBI Taxonomy" id="4538"/>
</organismHost>
<organismHost>
    <name type="scientific">Oryza sativa</name>
    <name type="common">Rice</name>
    <dbReference type="NCBI Taxonomy" id="4530"/>
</organismHost>
<organismHost>
    <name type="scientific">Paspalum conjugatum</name>
    <name type="common">Hilo grass</name>
    <dbReference type="NCBI Taxonomy" id="158143"/>
</organismHost>
<organismHost>
    <name type="scientific">Paspalum notatum</name>
    <name type="common">Bahia grass</name>
    <dbReference type="NCBI Taxonomy" id="147272"/>
</organismHost>
<organismHost>
    <name type="scientific">Paspalum scrobiculatum</name>
    <dbReference type="NCBI Taxonomy" id="173849"/>
</organismHost>
<organismHost>
    <name type="scientific">Rottboellia cochinchinensis</name>
    <dbReference type="NCBI Taxonomy" id="300125"/>
</organismHost>
<organismHost>
    <name type="scientific">Saccharum officinarum</name>
    <name type="common">Sugarcane</name>
    <dbReference type="NCBI Taxonomy" id="4547"/>
</organismHost>
<organismHost>
    <name type="scientific">Setaria barbata</name>
    <dbReference type="NCBI Taxonomy" id="192628"/>
</organismHost>
<organismHost>
    <name type="scientific">Triticum aestivum</name>
    <name type="common">Wheat</name>
    <dbReference type="NCBI Taxonomy" id="4565"/>
</organismHost>
<organismHost>
    <name type="scientific">Urochloa deflexa</name>
    <dbReference type="NCBI Taxonomy" id="240436"/>
</organismHost>
<organismHost>
    <name type="scientific">Zea mays</name>
    <name type="common">Maize</name>
    <dbReference type="NCBI Taxonomy" id="4577"/>
</organismHost>
<gene>
    <name type="ORF">C1/C2</name>
</gene>
<sequence>MASSSSNRQFSHRNANTFLTYPKCPENPEIACQMIWELVVRWIPKYILCAREAHKDGSLHLHALLQTEKPVRISDSRFFDINGFHPNIQSAKSVNRVRDYILKEPLAVFERGTFIPRKSPFLGKSDSEVKEKKPSKDEIMRDIISHATSKEEYLSMIQKELPFDWSTKLQYFEYSANKLFPEIQEEFTNPHPPSSPDLLCNESINDWLQPNIFQSSDERSRKQSLYIVGPTRTGKSTWARSLGVHNYWQNNVDWSSYNEDAIYNIVDDIPFKFCPCWKQLVGCQRDFIVNPKYGKKKKVQKKSKPTIILANSDEDWMKEMTPGQLEYFEANCIIYIMSPGEKWYSPPELPPTEAVHSDRS</sequence>
<dbReference type="EC" id="2.7.7.-"/>
<dbReference type="EC" id="3.1.21.-"/>
<dbReference type="EMBL" id="X01633">
    <property type="protein sequence ID" value="CAA25792.1"/>
    <property type="status" value="ALT_SEQ"/>
    <property type="molecule type" value="Genomic_DNA"/>
</dbReference>
<dbReference type="EMBL" id="X01633">
    <property type="protein sequence ID" value="CAA25793.1"/>
    <property type="status" value="ALT_SEQ"/>
    <property type="molecule type" value="Genomic_DNA"/>
</dbReference>
<dbReference type="SMR" id="P14978"/>
<dbReference type="Proteomes" id="UP000007779">
    <property type="component" value="Genome"/>
</dbReference>
<dbReference type="GO" id="GO:0042025">
    <property type="term" value="C:host cell nucleus"/>
    <property type="evidence" value="ECO:0007669"/>
    <property type="project" value="UniProtKB-SubCell"/>
</dbReference>
<dbReference type="GO" id="GO:0005524">
    <property type="term" value="F:ATP binding"/>
    <property type="evidence" value="ECO:0007669"/>
    <property type="project" value="UniProtKB-KW"/>
</dbReference>
<dbReference type="GO" id="GO:0003677">
    <property type="term" value="F:DNA binding"/>
    <property type="evidence" value="ECO:0007669"/>
    <property type="project" value="UniProtKB-KW"/>
</dbReference>
<dbReference type="GO" id="GO:0016888">
    <property type="term" value="F:endodeoxyribonuclease activity, producing 5'-phosphomonoesters"/>
    <property type="evidence" value="ECO:0007669"/>
    <property type="project" value="InterPro"/>
</dbReference>
<dbReference type="GO" id="GO:0004386">
    <property type="term" value="F:helicase activity"/>
    <property type="evidence" value="ECO:0007669"/>
    <property type="project" value="UniProtKB-KW"/>
</dbReference>
<dbReference type="GO" id="GO:0046872">
    <property type="term" value="F:metal ion binding"/>
    <property type="evidence" value="ECO:0007669"/>
    <property type="project" value="UniProtKB-KW"/>
</dbReference>
<dbReference type="GO" id="GO:0016779">
    <property type="term" value="F:nucleotidyltransferase activity"/>
    <property type="evidence" value="ECO:0007669"/>
    <property type="project" value="UniProtKB-KW"/>
</dbReference>
<dbReference type="GO" id="GO:0005198">
    <property type="term" value="F:structural molecule activity"/>
    <property type="evidence" value="ECO:0007669"/>
    <property type="project" value="InterPro"/>
</dbReference>
<dbReference type="GO" id="GO:0006260">
    <property type="term" value="P:DNA replication"/>
    <property type="evidence" value="ECO:0007669"/>
    <property type="project" value="UniProtKB-KW"/>
</dbReference>
<dbReference type="Gene3D" id="3.40.1310.20">
    <property type="match status" value="1"/>
</dbReference>
<dbReference type="InterPro" id="IPR049912">
    <property type="entry name" value="CRESS_DNA_REP"/>
</dbReference>
<dbReference type="InterPro" id="IPR001146">
    <property type="entry name" value="Gemini_AL1_MSV"/>
</dbReference>
<dbReference type="InterPro" id="IPR001191">
    <property type="entry name" value="Gemini_AL1_REP"/>
</dbReference>
<dbReference type="InterPro" id="IPR022692">
    <property type="entry name" value="Gemini_AL1_REP_central"/>
</dbReference>
<dbReference type="InterPro" id="IPR027417">
    <property type="entry name" value="P-loop_NTPase"/>
</dbReference>
<dbReference type="Pfam" id="PF00799">
    <property type="entry name" value="Gemini_AL1"/>
    <property type="match status" value="1"/>
</dbReference>
<dbReference type="Pfam" id="PF08283">
    <property type="entry name" value="Gemini_AL1_M"/>
    <property type="match status" value="1"/>
</dbReference>
<dbReference type="PRINTS" id="PR00227">
    <property type="entry name" value="GEMCOATAL1"/>
</dbReference>
<dbReference type="PRINTS" id="PR00229">
    <property type="entry name" value="GEMCOATMSVL1"/>
</dbReference>
<dbReference type="SUPFAM" id="SSF55464">
    <property type="entry name" value="Origin of replication-binding domain, RBD-like"/>
    <property type="match status" value="1"/>
</dbReference>
<dbReference type="SUPFAM" id="SSF52540">
    <property type="entry name" value="P-loop containing nucleoside triphosphate hydrolases"/>
    <property type="match status" value="1"/>
</dbReference>
<dbReference type="PROSITE" id="PS52020">
    <property type="entry name" value="CRESS_DNA_REP"/>
    <property type="match status" value="1"/>
</dbReference>